<comment type="function">
    <text evidence="1">NDH-1 shuttles electrons from NADH, via FMN and iron-sulfur (Fe-S) centers, to quinones in the respiratory chain. The immediate electron acceptor for the enzyme in this species is believed to be ubiquinone. Couples the redox reaction to proton translocation (for every two electrons transferred, four hydrogen ions are translocated across the cytoplasmic membrane), and thus conserves the redox energy in a proton gradient.</text>
</comment>
<comment type="catalytic activity">
    <reaction evidence="1">
        <text>a quinone + NADH + 5 H(+)(in) = a quinol + NAD(+) + 4 H(+)(out)</text>
        <dbReference type="Rhea" id="RHEA:57888"/>
        <dbReference type="ChEBI" id="CHEBI:15378"/>
        <dbReference type="ChEBI" id="CHEBI:24646"/>
        <dbReference type="ChEBI" id="CHEBI:57540"/>
        <dbReference type="ChEBI" id="CHEBI:57945"/>
        <dbReference type="ChEBI" id="CHEBI:132124"/>
    </reaction>
</comment>
<comment type="subunit">
    <text evidence="1">NDH-1 is composed of 13 different subunits. Subunits NuoA, H, J, K, L, M, N constitute the membrane sector of the complex.</text>
</comment>
<comment type="subcellular location">
    <subcellularLocation>
        <location evidence="1">Cell inner membrane</location>
        <topology evidence="1">Multi-pass membrane protein</topology>
    </subcellularLocation>
</comment>
<comment type="similarity">
    <text evidence="1">Belongs to the complex I subunit 3 family.</text>
</comment>
<comment type="sequence caution" evidence="3">
    <conflict type="erroneous initiation">
        <sequence resource="EMBL-CDS" id="CAL21180"/>
    </conflict>
</comment>
<organism>
    <name type="scientific">Yersinia pestis</name>
    <dbReference type="NCBI Taxonomy" id="632"/>
    <lineage>
        <taxon>Bacteria</taxon>
        <taxon>Pseudomonadati</taxon>
        <taxon>Pseudomonadota</taxon>
        <taxon>Gammaproteobacteria</taxon>
        <taxon>Enterobacterales</taxon>
        <taxon>Yersiniaceae</taxon>
        <taxon>Yersinia</taxon>
    </lineage>
</organism>
<feature type="chain" id="PRO_0000362798" description="NADH-quinone oxidoreductase subunit A">
    <location>
        <begin position="1"/>
        <end position="166"/>
    </location>
</feature>
<feature type="transmembrane region" description="Helical" evidence="1">
    <location>
        <begin position="16"/>
        <end position="36"/>
    </location>
</feature>
<feature type="transmembrane region" description="Helical" evidence="1">
    <location>
        <begin position="68"/>
        <end position="88"/>
    </location>
</feature>
<feature type="transmembrane region" description="Helical" evidence="1">
    <location>
        <begin position="98"/>
        <end position="118"/>
    </location>
</feature>
<feature type="region of interest" description="Disordered" evidence="2">
    <location>
        <begin position="141"/>
        <end position="166"/>
    </location>
</feature>
<gene>
    <name evidence="1" type="primary">nuoA</name>
    <name type="ordered locus">YPO2555</name>
    <name type="ordered locus">y1630</name>
    <name type="ordered locus">YP_2366</name>
</gene>
<sequence>MRMSTTTEIIAHHWAFAVFLIGAVGLCGLMLLGAYFLGGRAQARAKNVPYESGIDSVGSARMRLSAKFYLVAMFFVIFDVEALYLYAWSISIRESGWIGFIEAAIFILVLLAGLFYLVRIGALDWTPTRSNRRVSKPSTVRYASSHPQDISQELSVAGSQQANESR</sequence>
<keyword id="KW-0997">Cell inner membrane</keyword>
<keyword id="KW-1003">Cell membrane</keyword>
<keyword id="KW-0472">Membrane</keyword>
<keyword id="KW-0520">NAD</keyword>
<keyword id="KW-0874">Quinone</keyword>
<keyword id="KW-1185">Reference proteome</keyword>
<keyword id="KW-1278">Translocase</keyword>
<keyword id="KW-0812">Transmembrane</keyword>
<keyword id="KW-1133">Transmembrane helix</keyword>
<keyword id="KW-0813">Transport</keyword>
<keyword id="KW-0830">Ubiquinone</keyword>
<name>NUOA_YERPE</name>
<evidence type="ECO:0000255" key="1">
    <source>
        <dbReference type="HAMAP-Rule" id="MF_01394"/>
    </source>
</evidence>
<evidence type="ECO:0000256" key="2">
    <source>
        <dbReference type="SAM" id="MobiDB-lite"/>
    </source>
</evidence>
<evidence type="ECO:0000305" key="3"/>
<dbReference type="EC" id="7.1.1.-" evidence="1"/>
<dbReference type="EMBL" id="AL590842">
    <property type="protein sequence ID" value="CAL21180.1"/>
    <property type="status" value="ALT_INIT"/>
    <property type="molecule type" value="Genomic_DNA"/>
</dbReference>
<dbReference type="EMBL" id="AE009952">
    <property type="protein sequence ID" value="AAM85199.1"/>
    <property type="molecule type" value="Genomic_DNA"/>
</dbReference>
<dbReference type="EMBL" id="AE017042">
    <property type="protein sequence ID" value="AAS62571.1"/>
    <property type="molecule type" value="Genomic_DNA"/>
</dbReference>
<dbReference type="PIR" id="AI0311">
    <property type="entry name" value="AI0311"/>
</dbReference>
<dbReference type="RefSeq" id="WP_002210279.1">
    <property type="nucleotide sequence ID" value="NZ_WUCM01000021.1"/>
</dbReference>
<dbReference type="RefSeq" id="YP_002347516.1">
    <property type="nucleotide sequence ID" value="NC_003143.1"/>
</dbReference>
<dbReference type="SMR" id="Q0WDX2"/>
<dbReference type="STRING" id="214092.YPO2555"/>
<dbReference type="PaxDb" id="214092-YPO2555"/>
<dbReference type="DNASU" id="1146577"/>
<dbReference type="EnsemblBacteria" id="AAS62571">
    <property type="protein sequence ID" value="AAS62571"/>
    <property type="gene ID" value="YP_2366"/>
</dbReference>
<dbReference type="KEGG" id="ype:YPO2555"/>
<dbReference type="KEGG" id="ypk:y1630"/>
<dbReference type="KEGG" id="ypm:YP_2366"/>
<dbReference type="PATRIC" id="fig|214092.21.peg.2979"/>
<dbReference type="eggNOG" id="COG0838">
    <property type="taxonomic scope" value="Bacteria"/>
</dbReference>
<dbReference type="HOGENOM" id="CLU_119549_2_1_6"/>
<dbReference type="OMA" id="YVYAFLY"/>
<dbReference type="Proteomes" id="UP000000815">
    <property type="component" value="Chromosome"/>
</dbReference>
<dbReference type="Proteomes" id="UP000001019">
    <property type="component" value="Chromosome"/>
</dbReference>
<dbReference type="Proteomes" id="UP000002490">
    <property type="component" value="Chromosome"/>
</dbReference>
<dbReference type="GO" id="GO:0005886">
    <property type="term" value="C:plasma membrane"/>
    <property type="evidence" value="ECO:0007669"/>
    <property type="project" value="UniProtKB-SubCell"/>
</dbReference>
<dbReference type="GO" id="GO:0045271">
    <property type="term" value="C:respiratory chain complex I"/>
    <property type="evidence" value="ECO:0000318"/>
    <property type="project" value="GO_Central"/>
</dbReference>
<dbReference type="GO" id="GO:0008137">
    <property type="term" value="F:NADH dehydrogenase (ubiquinone) activity"/>
    <property type="evidence" value="ECO:0000318"/>
    <property type="project" value="GO_Central"/>
</dbReference>
<dbReference type="GO" id="GO:0050136">
    <property type="term" value="F:NADH:ubiquinone reductase (non-electrogenic) activity"/>
    <property type="evidence" value="ECO:0007669"/>
    <property type="project" value="UniProtKB-UniRule"/>
</dbReference>
<dbReference type="GO" id="GO:0048038">
    <property type="term" value="F:quinone binding"/>
    <property type="evidence" value="ECO:0007669"/>
    <property type="project" value="UniProtKB-KW"/>
</dbReference>
<dbReference type="FunFam" id="1.20.58.1610:FF:000003">
    <property type="entry name" value="NADH-quinone oxidoreductase subunit A"/>
    <property type="match status" value="1"/>
</dbReference>
<dbReference type="Gene3D" id="1.20.58.1610">
    <property type="entry name" value="NADH:ubiquinone/plastoquinone oxidoreductase, chain 3"/>
    <property type="match status" value="1"/>
</dbReference>
<dbReference type="HAMAP" id="MF_01394">
    <property type="entry name" value="NDH1_NuoA"/>
    <property type="match status" value="1"/>
</dbReference>
<dbReference type="InterPro" id="IPR023043">
    <property type="entry name" value="NAD(P)H_OxRDtase_bac/plastid"/>
</dbReference>
<dbReference type="InterPro" id="IPR000440">
    <property type="entry name" value="NADH_UbQ/plastoQ_OxRdtase_su3"/>
</dbReference>
<dbReference type="InterPro" id="IPR038430">
    <property type="entry name" value="NDAH_ubi_oxred_su3_sf"/>
</dbReference>
<dbReference type="PANTHER" id="PTHR11058:SF21">
    <property type="entry name" value="NADH-QUINONE OXIDOREDUCTASE SUBUNIT A"/>
    <property type="match status" value="1"/>
</dbReference>
<dbReference type="PANTHER" id="PTHR11058">
    <property type="entry name" value="NADH-UBIQUINONE OXIDOREDUCTASE CHAIN 3"/>
    <property type="match status" value="1"/>
</dbReference>
<dbReference type="Pfam" id="PF00507">
    <property type="entry name" value="Oxidored_q4"/>
    <property type="match status" value="1"/>
</dbReference>
<accession>Q0WDX2</accession>
<accession>Q74T27</accession>
<accession>Q8D0T0</accession>
<proteinExistence type="inferred from homology"/>
<reference key="1">
    <citation type="journal article" date="2001" name="Nature">
        <title>Genome sequence of Yersinia pestis, the causative agent of plague.</title>
        <authorList>
            <person name="Parkhill J."/>
            <person name="Wren B.W."/>
            <person name="Thomson N.R."/>
            <person name="Titball R.W."/>
            <person name="Holden M.T.G."/>
            <person name="Prentice M.B."/>
            <person name="Sebaihia M."/>
            <person name="James K.D."/>
            <person name="Churcher C.M."/>
            <person name="Mungall K.L."/>
            <person name="Baker S."/>
            <person name="Basham D."/>
            <person name="Bentley S.D."/>
            <person name="Brooks K."/>
            <person name="Cerdeno-Tarraga A.-M."/>
            <person name="Chillingworth T."/>
            <person name="Cronin A."/>
            <person name="Davies R.M."/>
            <person name="Davis P."/>
            <person name="Dougan G."/>
            <person name="Feltwell T."/>
            <person name="Hamlin N."/>
            <person name="Holroyd S."/>
            <person name="Jagels K."/>
            <person name="Karlyshev A.V."/>
            <person name="Leather S."/>
            <person name="Moule S."/>
            <person name="Oyston P.C.F."/>
            <person name="Quail M.A."/>
            <person name="Rutherford K.M."/>
            <person name="Simmonds M."/>
            <person name="Skelton J."/>
            <person name="Stevens K."/>
            <person name="Whitehead S."/>
            <person name="Barrell B.G."/>
        </authorList>
    </citation>
    <scope>NUCLEOTIDE SEQUENCE [LARGE SCALE GENOMIC DNA]</scope>
    <source>
        <strain>CO-92 / Biovar Orientalis</strain>
    </source>
</reference>
<reference key="2">
    <citation type="journal article" date="2002" name="J. Bacteriol.">
        <title>Genome sequence of Yersinia pestis KIM.</title>
        <authorList>
            <person name="Deng W."/>
            <person name="Burland V."/>
            <person name="Plunkett G. III"/>
            <person name="Boutin A."/>
            <person name="Mayhew G.F."/>
            <person name="Liss P."/>
            <person name="Perna N.T."/>
            <person name="Rose D.J."/>
            <person name="Mau B."/>
            <person name="Zhou S."/>
            <person name="Schwartz D.C."/>
            <person name="Fetherston J.D."/>
            <person name="Lindler L.E."/>
            <person name="Brubaker R.R."/>
            <person name="Plano G.V."/>
            <person name="Straley S.C."/>
            <person name="McDonough K.A."/>
            <person name="Nilles M.L."/>
            <person name="Matson J.S."/>
            <person name="Blattner F.R."/>
            <person name="Perry R.D."/>
        </authorList>
    </citation>
    <scope>NUCLEOTIDE SEQUENCE [LARGE SCALE GENOMIC DNA]</scope>
    <source>
        <strain>KIM10+ / Biovar Mediaevalis</strain>
    </source>
</reference>
<reference key="3">
    <citation type="journal article" date="2004" name="DNA Res.">
        <title>Complete genome sequence of Yersinia pestis strain 91001, an isolate avirulent to humans.</title>
        <authorList>
            <person name="Song Y."/>
            <person name="Tong Z."/>
            <person name="Wang J."/>
            <person name="Wang L."/>
            <person name="Guo Z."/>
            <person name="Han Y."/>
            <person name="Zhang J."/>
            <person name="Pei D."/>
            <person name="Zhou D."/>
            <person name="Qin H."/>
            <person name="Pang X."/>
            <person name="Han Y."/>
            <person name="Zhai J."/>
            <person name="Li M."/>
            <person name="Cui B."/>
            <person name="Qi Z."/>
            <person name="Jin L."/>
            <person name="Dai R."/>
            <person name="Chen F."/>
            <person name="Li S."/>
            <person name="Ye C."/>
            <person name="Du Z."/>
            <person name="Lin W."/>
            <person name="Wang J."/>
            <person name="Yu J."/>
            <person name="Yang H."/>
            <person name="Wang J."/>
            <person name="Huang P."/>
            <person name="Yang R."/>
        </authorList>
    </citation>
    <scope>NUCLEOTIDE SEQUENCE [LARGE SCALE GENOMIC DNA]</scope>
    <source>
        <strain>91001 / Biovar Mediaevalis</strain>
    </source>
</reference>
<protein>
    <recommendedName>
        <fullName evidence="1">NADH-quinone oxidoreductase subunit A</fullName>
        <ecNumber evidence="1">7.1.1.-</ecNumber>
    </recommendedName>
    <alternativeName>
        <fullName evidence="1">NADH dehydrogenase I subunit A</fullName>
    </alternativeName>
    <alternativeName>
        <fullName evidence="1">NDH-1 subunit A</fullName>
    </alternativeName>
    <alternativeName>
        <fullName evidence="1">NUO1</fullName>
    </alternativeName>
</protein>